<comment type="subcellular location">
    <subcellularLocation>
        <location evidence="1">Cytoplasm</location>
    </subcellularLocation>
</comment>
<comment type="similarity">
    <text evidence="1">Belongs to the UPF0291 family.</text>
</comment>
<keyword id="KW-0963">Cytoplasm</keyword>
<feature type="chain" id="PRO_1000137018" description="UPF0291 protein SPCG_1462">
    <location>
        <begin position="1"/>
        <end position="85"/>
    </location>
</feature>
<feature type="region of interest" description="Disordered" evidence="2">
    <location>
        <begin position="62"/>
        <end position="85"/>
    </location>
</feature>
<organism>
    <name type="scientific">Streptococcus pneumoniae (strain CGSP14)</name>
    <dbReference type="NCBI Taxonomy" id="516950"/>
    <lineage>
        <taxon>Bacteria</taxon>
        <taxon>Bacillati</taxon>
        <taxon>Bacillota</taxon>
        <taxon>Bacilli</taxon>
        <taxon>Lactobacillales</taxon>
        <taxon>Streptococcaceae</taxon>
        <taxon>Streptococcus</taxon>
    </lineage>
</organism>
<accession>B2IQU0</accession>
<proteinExistence type="inferred from homology"/>
<sequence>MDPKKIARINELAKKKKTEGLTSEEKVEQAKLREEYIEGYRRAVRHHIEGIKIVDEEGNDVTPEKLRQVQREKGLHGRSLDDPNS</sequence>
<protein>
    <recommendedName>
        <fullName evidence="1">UPF0291 protein SPCG_1462</fullName>
    </recommendedName>
</protein>
<gene>
    <name type="ordered locus">SPCG_1462</name>
</gene>
<dbReference type="EMBL" id="CP001033">
    <property type="protein sequence ID" value="ACB90714.1"/>
    <property type="molecule type" value="Genomic_DNA"/>
</dbReference>
<dbReference type="RefSeq" id="WP_000371293.1">
    <property type="nucleotide sequence ID" value="NC_010582.1"/>
</dbReference>
<dbReference type="SMR" id="B2IQU0"/>
<dbReference type="KEGG" id="spw:SPCG_1462"/>
<dbReference type="HOGENOM" id="CLU_173137_0_2_9"/>
<dbReference type="GO" id="GO:0005737">
    <property type="term" value="C:cytoplasm"/>
    <property type="evidence" value="ECO:0007669"/>
    <property type="project" value="UniProtKB-SubCell"/>
</dbReference>
<dbReference type="Gene3D" id="1.10.287.540">
    <property type="entry name" value="Helix hairpin bin"/>
    <property type="match status" value="1"/>
</dbReference>
<dbReference type="HAMAP" id="MF_01103">
    <property type="entry name" value="UPF0291"/>
    <property type="match status" value="1"/>
</dbReference>
<dbReference type="InterPro" id="IPR009242">
    <property type="entry name" value="DUF896"/>
</dbReference>
<dbReference type="NCBIfam" id="NF002711">
    <property type="entry name" value="PRK02539.1"/>
    <property type="match status" value="1"/>
</dbReference>
<dbReference type="PANTHER" id="PTHR37300">
    <property type="entry name" value="UPF0291 PROTEIN CBO2609/CLC_2481"/>
    <property type="match status" value="1"/>
</dbReference>
<dbReference type="PANTHER" id="PTHR37300:SF1">
    <property type="entry name" value="UPF0291 PROTEIN YNZC"/>
    <property type="match status" value="1"/>
</dbReference>
<dbReference type="Pfam" id="PF05979">
    <property type="entry name" value="DUF896"/>
    <property type="match status" value="1"/>
</dbReference>
<dbReference type="SUPFAM" id="SSF158221">
    <property type="entry name" value="YnzC-like"/>
    <property type="match status" value="1"/>
</dbReference>
<name>Y1462_STRPS</name>
<reference key="1">
    <citation type="journal article" date="2009" name="BMC Genomics">
        <title>Genome evolution driven by host adaptations results in a more virulent and antimicrobial-resistant Streptococcus pneumoniae serotype 14.</title>
        <authorList>
            <person name="Ding F."/>
            <person name="Tang P."/>
            <person name="Hsu M.-H."/>
            <person name="Cui P."/>
            <person name="Hu S."/>
            <person name="Yu J."/>
            <person name="Chiu C.-H."/>
        </authorList>
    </citation>
    <scope>NUCLEOTIDE SEQUENCE [LARGE SCALE GENOMIC DNA]</scope>
    <source>
        <strain>CGSP14</strain>
    </source>
</reference>
<evidence type="ECO:0000255" key="1">
    <source>
        <dbReference type="HAMAP-Rule" id="MF_01103"/>
    </source>
</evidence>
<evidence type="ECO:0000256" key="2">
    <source>
        <dbReference type="SAM" id="MobiDB-lite"/>
    </source>
</evidence>